<name>KT3K_PASMU</name>
<protein>
    <recommendedName>
        <fullName>Probable ketoamine kinase PM0587</fullName>
        <ecNumber evidence="1">2.7.1.-</ecNumber>
    </recommendedName>
</protein>
<dbReference type="EC" id="2.7.1.-" evidence="1"/>
<dbReference type="EMBL" id="AE004439">
    <property type="protein sequence ID" value="AAK02671.1"/>
    <property type="molecule type" value="Genomic_DNA"/>
</dbReference>
<dbReference type="RefSeq" id="WP_005726416.1">
    <property type="nucleotide sequence ID" value="NC_002663.1"/>
</dbReference>
<dbReference type="SMR" id="Q9CN56"/>
<dbReference type="STRING" id="272843.PM0587"/>
<dbReference type="EnsemblBacteria" id="AAK02671">
    <property type="protein sequence ID" value="AAK02671"/>
    <property type="gene ID" value="PM0587"/>
</dbReference>
<dbReference type="KEGG" id="pmu:PM0587"/>
<dbReference type="PATRIC" id="fig|272843.6.peg.594"/>
<dbReference type="HOGENOM" id="CLU_036517_0_0_6"/>
<dbReference type="OrthoDB" id="5291879at2"/>
<dbReference type="Proteomes" id="UP000000809">
    <property type="component" value="Chromosome"/>
</dbReference>
<dbReference type="GO" id="GO:0005524">
    <property type="term" value="F:ATP binding"/>
    <property type="evidence" value="ECO:0007669"/>
    <property type="project" value="UniProtKB-KW"/>
</dbReference>
<dbReference type="GO" id="GO:0016301">
    <property type="term" value="F:kinase activity"/>
    <property type="evidence" value="ECO:0007669"/>
    <property type="project" value="UniProtKB-KW"/>
</dbReference>
<dbReference type="Gene3D" id="3.90.1200.10">
    <property type="match status" value="1"/>
</dbReference>
<dbReference type="Gene3D" id="3.30.200.20">
    <property type="entry name" value="Phosphorylase Kinase, domain 1"/>
    <property type="match status" value="1"/>
</dbReference>
<dbReference type="InterPro" id="IPR016477">
    <property type="entry name" value="Fructo-/Ketosamine-3-kinase"/>
</dbReference>
<dbReference type="InterPro" id="IPR011009">
    <property type="entry name" value="Kinase-like_dom_sf"/>
</dbReference>
<dbReference type="PANTHER" id="PTHR12149">
    <property type="entry name" value="FRUCTOSAMINE 3 KINASE-RELATED PROTEIN"/>
    <property type="match status" value="1"/>
</dbReference>
<dbReference type="PANTHER" id="PTHR12149:SF8">
    <property type="entry name" value="PROTEIN-RIBULOSAMINE 3-KINASE"/>
    <property type="match status" value="1"/>
</dbReference>
<dbReference type="Pfam" id="PF03881">
    <property type="entry name" value="Fructosamin_kin"/>
    <property type="match status" value="1"/>
</dbReference>
<dbReference type="PIRSF" id="PIRSF006221">
    <property type="entry name" value="Ketosamine-3-kinase"/>
    <property type="match status" value="1"/>
</dbReference>
<dbReference type="SUPFAM" id="SSF56112">
    <property type="entry name" value="Protein kinase-like (PK-like)"/>
    <property type="match status" value="1"/>
</dbReference>
<proteinExistence type="inferred from homology"/>
<feature type="chain" id="PRO_0000216346" description="Probable ketoamine kinase PM0587">
    <location>
        <begin position="1"/>
        <end position="288"/>
    </location>
</feature>
<feature type="binding site" evidence="2">
    <location>
        <begin position="92"/>
        <end position="94"/>
    </location>
    <ligand>
        <name>ATP</name>
        <dbReference type="ChEBI" id="CHEBI:30616"/>
    </ligand>
</feature>
<sequence>MWKHVSQVLADQFGAYYSIKHKEKIHTGEMHEAWIIDDGIQPVFLKVNDKTFRSMFRAEADQLLLLAKTNTINVPNVYTVGCSHTHSFLLLEALPLDKTNPVDAMGKFGEQLAKLHLIKGADNYGLDFDTWLGPEYQPNGWKENWATFFSEQRIGWQLQICREKNLVFGDIEVLVKKVAELLAKHKPQPALLHGNLWIENCATVKQEIFTYDPACYWGDRECDLAFSELFEPFPRQFYESYDRTYPIDEGYPERKAIYQLYYLLNFSHRFNKHYVELTKKFIHDILSR</sequence>
<evidence type="ECO:0000250" key="1">
    <source>
        <dbReference type="UniProtKB" id="Q9H479"/>
    </source>
</evidence>
<evidence type="ECO:0000250" key="2">
    <source>
        <dbReference type="UniProtKB" id="Q9HA64"/>
    </source>
</evidence>
<evidence type="ECO:0000305" key="3"/>
<gene>
    <name type="ordered locus">PM0587</name>
</gene>
<reference key="1">
    <citation type="journal article" date="2001" name="Proc. Natl. Acad. Sci. U.S.A.">
        <title>Complete genomic sequence of Pasteurella multocida Pm70.</title>
        <authorList>
            <person name="May B.J."/>
            <person name="Zhang Q."/>
            <person name="Li L.L."/>
            <person name="Paustian M.L."/>
            <person name="Whittam T.S."/>
            <person name="Kapur V."/>
        </authorList>
    </citation>
    <scope>NUCLEOTIDE SEQUENCE [LARGE SCALE GENOMIC DNA]</scope>
    <source>
        <strain>Pm70</strain>
    </source>
</reference>
<comment type="function">
    <text evidence="1">Ketoamine kinase that phosphorylates ketoamines on the third carbon of the sugar moiety to generate ketoamine 3-phosphate.</text>
</comment>
<comment type="similarity">
    <text evidence="3">Belongs to the fructosamine kinase family.</text>
</comment>
<organism>
    <name type="scientific">Pasteurella multocida (strain Pm70)</name>
    <dbReference type="NCBI Taxonomy" id="272843"/>
    <lineage>
        <taxon>Bacteria</taxon>
        <taxon>Pseudomonadati</taxon>
        <taxon>Pseudomonadota</taxon>
        <taxon>Gammaproteobacteria</taxon>
        <taxon>Pasteurellales</taxon>
        <taxon>Pasteurellaceae</taxon>
        <taxon>Pasteurella</taxon>
    </lineage>
</organism>
<accession>Q9CN56</accession>
<keyword id="KW-0067">ATP-binding</keyword>
<keyword id="KW-0418">Kinase</keyword>
<keyword id="KW-0547">Nucleotide-binding</keyword>
<keyword id="KW-1185">Reference proteome</keyword>
<keyword id="KW-0808">Transferase</keyword>